<gene>
    <name type="primary">Inpp5e</name>
</gene>
<proteinExistence type="evidence at protein level"/>
<reference key="1">
    <citation type="journal article" date="2000" name="J. Biol. Chem.">
        <title>Cloning and characterization of a 72-kDa inositol-polyphosphate 5-phosphatase localized to the Golgi network.</title>
        <authorList>
            <person name="Kong A.M."/>
            <person name="Speed C.J."/>
            <person name="O'Malley C.J."/>
            <person name="Layton M.J."/>
            <person name="Meehan T."/>
            <person name="Loveland K.L."/>
            <person name="Cheema S."/>
            <person name="Ooms L.M."/>
            <person name="Mitchell C.A."/>
        </authorList>
    </citation>
    <scope>NUCLEOTIDE SEQUENCE [MRNA]</scope>
    <scope>FUNCTION</scope>
    <scope>CATALYTIC ACTIVITY</scope>
    <scope>SUBCELLULAR LOCATION</scope>
    <scope>TISSUE SPECIFICITY</scope>
    <source>
        <tissue>Brain</tissue>
    </source>
</reference>
<reference key="2">
    <citation type="journal article" date="2005" name="Science">
        <title>The transcriptional landscape of the mammalian genome.</title>
        <authorList>
            <person name="Carninci P."/>
            <person name="Kasukawa T."/>
            <person name="Katayama S."/>
            <person name="Gough J."/>
            <person name="Frith M.C."/>
            <person name="Maeda N."/>
            <person name="Oyama R."/>
            <person name="Ravasi T."/>
            <person name="Lenhard B."/>
            <person name="Wells C."/>
            <person name="Kodzius R."/>
            <person name="Shimokawa K."/>
            <person name="Bajic V.B."/>
            <person name="Brenner S.E."/>
            <person name="Batalov S."/>
            <person name="Forrest A.R."/>
            <person name="Zavolan M."/>
            <person name="Davis M.J."/>
            <person name="Wilming L.G."/>
            <person name="Aidinis V."/>
            <person name="Allen J.E."/>
            <person name="Ambesi-Impiombato A."/>
            <person name="Apweiler R."/>
            <person name="Aturaliya R.N."/>
            <person name="Bailey T.L."/>
            <person name="Bansal M."/>
            <person name="Baxter L."/>
            <person name="Beisel K.W."/>
            <person name="Bersano T."/>
            <person name="Bono H."/>
            <person name="Chalk A.M."/>
            <person name="Chiu K.P."/>
            <person name="Choudhary V."/>
            <person name="Christoffels A."/>
            <person name="Clutterbuck D.R."/>
            <person name="Crowe M.L."/>
            <person name="Dalla E."/>
            <person name="Dalrymple B.P."/>
            <person name="de Bono B."/>
            <person name="Della Gatta G."/>
            <person name="di Bernardo D."/>
            <person name="Down T."/>
            <person name="Engstrom P."/>
            <person name="Fagiolini M."/>
            <person name="Faulkner G."/>
            <person name="Fletcher C.F."/>
            <person name="Fukushima T."/>
            <person name="Furuno M."/>
            <person name="Futaki S."/>
            <person name="Gariboldi M."/>
            <person name="Georgii-Hemming P."/>
            <person name="Gingeras T.R."/>
            <person name="Gojobori T."/>
            <person name="Green R.E."/>
            <person name="Gustincich S."/>
            <person name="Harbers M."/>
            <person name="Hayashi Y."/>
            <person name="Hensch T.K."/>
            <person name="Hirokawa N."/>
            <person name="Hill D."/>
            <person name="Huminiecki L."/>
            <person name="Iacono M."/>
            <person name="Ikeo K."/>
            <person name="Iwama A."/>
            <person name="Ishikawa T."/>
            <person name="Jakt M."/>
            <person name="Kanapin A."/>
            <person name="Katoh M."/>
            <person name="Kawasawa Y."/>
            <person name="Kelso J."/>
            <person name="Kitamura H."/>
            <person name="Kitano H."/>
            <person name="Kollias G."/>
            <person name="Krishnan S.P."/>
            <person name="Kruger A."/>
            <person name="Kummerfeld S.K."/>
            <person name="Kurochkin I.V."/>
            <person name="Lareau L.F."/>
            <person name="Lazarevic D."/>
            <person name="Lipovich L."/>
            <person name="Liu J."/>
            <person name="Liuni S."/>
            <person name="McWilliam S."/>
            <person name="Madan Babu M."/>
            <person name="Madera M."/>
            <person name="Marchionni L."/>
            <person name="Matsuda H."/>
            <person name="Matsuzawa S."/>
            <person name="Miki H."/>
            <person name="Mignone F."/>
            <person name="Miyake S."/>
            <person name="Morris K."/>
            <person name="Mottagui-Tabar S."/>
            <person name="Mulder N."/>
            <person name="Nakano N."/>
            <person name="Nakauchi H."/>
            <person name="Ng P."/>
            <person name="Nilsson R."/>
            <person name="Nishiguchi S."/>
            <person name="Nishikawa S."/>
            <person name="Nori F."/>
            <person name="Ohara O."/>
            <person name="Okazaki Y."/>
            <person name="Orlando V."/>
            <person name="Pang K.C."/>
            <person name="Pavan W.J."/>
            <person name="Pavesi G."/>
            <person name="Pesole G."/>
            <person name="Petrovsky N."/>
            <person name="Piazza S."/>
            <person name="Reed J."/>
            <person name="Reid J.F."/>
            <person name="Ring B.Z."/>
            <person name="Ringwald M."/>
            <person name="Rost B."/>
            <person name="Ruan Y."/>
            <person name="Salzberg S.L."/>
            <person name="Sandelin A."/>
            <person name="Schneider C."/>
            <person name="Schoenbach C."/>
            <person name="Sekiguchi K."/>
            <person name="Semple C.A."/>
            <person name="Seno S."/>
            <person name="Sessa L."/>
            <person name="Sheng Y."/>
            <person name="Shibata Y."/>
            <person name="Shimada H."/>
            <person name="Shimada K."/>
            <person name="Silva D."/>
            <person name="Sinclair B."/>
            <person name="Sperling S."/>
            <person name="Stupka E."/>
            <person name="Sugiura K."/>
            <person name="Sultana R."/>
            <person name="Takenaka Y."/>
            <person name="Taki K."/>
            <person name="Tammoja K."/>
            <person name="Tan S.L."/>
            <person name="Tang S."/>
            <person name="Taylor M.S."/>
            <person name="Tegner J."/>
            <person name="Teichmann S.A."/>
            <person name="Ueda H.R."/>
            <person name="van Nimwegen E."/>
            <person name="Verardo R."/>
            <person name="Wei C.L."/>
            <person name="Yagi K."/>
            <person name="Yamanishi H."/>
            <person name="Zabarovsky E."/>
            <person name="Zhu S."/>
            <person name="Zimmer A."/>
            <person name="Hide W."/>
            <person name="Bult C."/>
            <person name="Grimmond S.M."/>
            <person name="Teasdale R.D."/>
            <person name="Liu E.T."/>
            <person name="Brusic V."/>
            <person name="Quackenbush J."/>
            <person name="Wahlestedt C."/>
            <person name="Mattick J.S."/>
            <person name="Hume D.A."/>
            <person name="Kai C."/>
            <person name="Sasaki D."/>
            <person name="Tomaru Y."/>
            <person name="Fukuda S."/>
            <person name="Kanamori-Katayama M."/>
            <person name="Suzuki M."/>
            <person name="Aoki J."/>
            <person name="Arakawa T."/>
            <person name="Iida J."/>
            <person name="Imamura K."/>
            <person name="Itoh M."/>
            <person name="Kato T."/>
            <person name="Kawaji H."/>
            <person name="Kawagashira N."/>
            <person name="Kawashima T."/>
            <person name="Kojima M."/>
            <person name="Kondo S."/>
            <person name="Konno H."/>
            <person name="Nakano K."/>
            <person name="Ninomiya N."/>
            <person name="Nishio T."/>
            <person name="Okada M."/>
            <person name="Plessy C."/>
            <person name="Shibata K."/>
            <person name="Shiraki T."/>
            <person name="Suzuki S."/>
            <person name="Tagami M."/>
            <person name="Waki K."/>
            <person name="Watahiki A."/>
            <person name="Okamura-Oho Y."/>
            <person name="Suzuki H."/>
            <person name="Kawai J."/>
            <person name="Hayashizaki Y."/>
        </authorList>
    </citation>
    <scope>NUCLEOTIDE SEQUENCE [LARGE SCALE MRNA]</scope>
    <source>
        <strain>C57BL/6J</strain>
        <strain>NOD</strain>
        <tissue>Aorta</tissue>
        <tissue>Vein</tissue>
    </source>
</reference>
<reference key="3">
    <citation type="journal article" date="2004" name="Genome Res.">
        <title>The status, quality, and expansion of the NIH full-length cDNA project: the Mammalian Gene Collection (MGC).</title>
        <authorList>
            <consortium name="The MGC Project Team"/>
        </authorList>
    </citation>
    <scope>NUCLEOTIDE SEQUENCE [LARGE SCALE MRNA]</scope>
    <source>
        <strain>C57BL/6J</strain>
        <tissue>Brain</tissue>
    </source>
</reference>
<reference key="4">
    <citation type="journal article" date="2009" name="Nat. Genet.">
        <title>INPP5E mutations cause primary cilium signaling defects, ciliary instability and ciliopathies in human and mouse.</title>
        <authorList>
            <person name="Jacoby M."/>
            <person name="Cox J.J."/>
            <person name="Gayral S."/>
            <person name="Hampshire D.J."/>
            <person name="Ayub M."/>
            <person name="Blockmans M."/>
            <person name="Pernot E."/>
            <person name="Kisseleva M.V."/>
            <person name="Compere P."/>
            <person name="Schiffmann S.N."/>
            <person name="Gergely F."/>
            <person name="Riley J.H."/>
            <person name="Perez-Morga D."/>
            <person name="Woods C.G."/>
            <person name="Schurmans S."/>
        </authorList>
    </citation>
    <scope>SUBCELLULAR LOCATION</scope>
    <scope>DISRUPTION PHENOTYPE</scope>
    <scope>FUNCTION</scope>
</reference>
<reference key="5">
    <citation type="journal article" date="2010" name="Cell">
        <title>A tissue-specific atlas of mouse protein phosphorylation and expression.</title>
        <authorList>
            <person name="Huttlin E.L."/>
            <person name="Jedrychowski M.P."/>
            <person name="Elias J.E."/>
            <person name="Goswami T."/>
            <person name="Rad R."/>
            <person name="Beausoleil S.A."/>
            <person name="Villen J."/>
            <person name="Haas W."/>
            <person name="Sowa M.E."/>
            <person name="Gygi S.P."/>
        </authorList>
    </citation>
    <scope>PHOSPHORYLATION [LARGE SCALE ANALYSIS] AT SER-103; THR-197 AND SER-259</scope>
    <scope>IDENTIFICATION BY MASS SPECTROMETRY [LARGE SCALE ANALYSIS]</scope>
    <source>
        <tissue>Brain</tissue>
        <tissue>Brown adipose tissue</tissue>
        <tissue>Heart</tissue>
        <tissue>Kidney</tissue>
        <tissue>Lung</tissue>
        <tissue>Spleen</tissue>
    </source>
</reference>
<reference key="6">
    <citation type="journal article" date="2015" name="Neurogenetics">
        <title>Deletion of Inpp5a causes ataxia and cerebellar degeneration in mice.</title>
        <authorList>
            <person name="Yang A.W."/>
            <person name="Sachs A.J."/>
            <person name="Nystuen A.M."/>
        </authorList>
    </citation>
    <scope>SUBCELLULAR LOCATION</scope>
</reference>
<protein>
    <recommendedName>
        <fullName>Phosphatidylinositol polyphosphate 5-phosphatase type IV</fullName>
    </recommendedName>
    <alternativeName>
        <fullName evidence="7">72 kDa inositol polyphosphate 5-phosphatase</fullName>
    </alternativeName>
    <alternativeName>
        <fullName>Inositol polyphosphate-5-phosphatase E</fullName>
    </alternativeName>
    <alternativeName>
        <fullName>Phosphatidylinositol 4,5-bisphosphate 5-phosphatase</fullName>
        <ecNumber evidence="1">3.1.3.36</ecNumber>
    </alternativeName>
    <alternativeName>
        <fullName>Phosphatidylinositol-3,4,5-trisphosphate 5-phosphatase</fullName>
        <ecNumber evidence="4">3.1.3.86</ecNumber>
    </alternativeName>
</protein>
<evidence type="ECO:0000250" key="1">
    <source>
        <dbReference type="UniProtKB" id="Q9NRR6"/>
    </source>
</evidence>
<evidence type="ECO:0000250" key="2">
    <source>
        <dbReference type="UniProtKB" id="Q9WVR1"/>
    </source>
</evidence>
<evidence type="ECO:0000256" key="3">
    <source>
        <dbReference type="SAM" id="MobiDB-lite"/>
    </source>
</evidence>
<evidence type="ECO:0000269" key="4">
    <source>
    </source>
</evidence>
<evidence type="ECO:0000269" key="5">
    <source>
    </source>
</evidence>
<evidence type="ECO:0000269" key="6">
    <source>
    </source>
</evidence>
<evidence type="ECO:0000303" key="7">
    <source>
    </source>
</evidence>
<evidence type="ECO:0000305" key="8"/>
<evidence type="ECO:0000305" key="9">
    <source>
    </source>
</evidence>
<evidence type="ECO:0007744" key="10">
    <source>
    </source>
</evidence>
<organism>
    <name type="scientific">Mus musculus</name>
    <name type="common">Mouse</name>
    <dbReference type="NCBI Taxonomy" id="10090"/>
    <lineage>
        <taxon>Eukaryota</taxon>
        <taxon>Metazoa</taxon>
        <taxon>Chordata</taxon>
        <taxon>Craniata</taxon>
        <taxon>Vertebrata</taxon>
        <taxon>Euteleostomi</taxon>
        <taxon>Mammalia</taxon>
        <taxon>Eutheria</taxon>
        <taxon>Euarchontoglires</taxon>
        <taxon>Glires</taxon>
        <taxon>Rodentia</taxon>
        <taxon>Myomorpha</taxon>
        <taxon>Muroidea</taxon>
        <taxon>Muridae</taxon>
        <taxon>Murinae</taxon>
        <taxon>Mus</taxon>
        <taxon>Mus</taxon>
    </lineage>
</organism>
<sequence>MPSKSACLRHTEAPGQLEGRMLQGQPPNTEKKLIPTPGFLPASDSQGSETNPMPPFSIPAKTSNQNPQTKANLITPQPPIRPKLERTLSLDDKGWRRRRFRGSQEDLTVQNGASPCRGSLQDSVAQSPAYSRPLPCLSTSLQEIPKSRRATGSEGGSPSLWSDCLSGMISTSLDLLHRDAASGGPPSRLASLHASHTPPAMDLSIASSSLRTANKVDPEHTDYKLRMQTRLVRAHSNLGPSRPRSPLAGDDHSIHSARSFSLLAPIRTKDIRSRSYLEGSLLASGALLGAEELARYFPDRNMALFVATWNMQGQKELPASLDEFLLPTEADYTQDLYVIGIQEGCSDRREWETRLQETLGPQYVLLSSAAHGVLYMSLFIRRDLIWFCSEVEYSTVTTRIVSQIKTKGALGVSFTFFGTSFLFITSHFTSGDGKVAERLLDYSRTIQALALPRNVPDTNPYRSSAGDVTTRFDEVFWFGDFNFRLSGGRVAVEAFLKQKPEVDVLALLQHDQLTREMKKGSIFRGFEEAEIHFLPSYKFDIGKDTYDSTSKQRTPSYTDRVLYKSRHKGDICPMKYSSCPGIKTSDHRPVYGLFQVKVRPGRDNIPLAAGKFDRELYLIGIKRRISKEIQRQEALKSQSSSAVCTVS</sequence>
<accession>Q9JII1</accession>
<accession>Q3TCC9</accession>
<keyword id="KW-1003">Cell membrane</keyword>
<keyword id="KW-0966">Cell projection</keyword>
<keyword id="KW-0969">Cilium</keyword>
<keyword id="KW-0963">Cytoplasm</keyword>
<keyword id="KW-0206">Cytoskeleton</keyword>
<keyword id="KW-0333">Golgi apparatus</keyword>
<keyword id="KW-0378">Hydrolase</keyword>
<keyword id="KW-0443">Lipid metabolism</keyword>
<keyword id="KW-0449">Lipoprotein</keyword>
<keyword id="KW-0472">Membrane</keyword>
<keyword id="KW-0488">Methylation</keyword>
<keyword id="KW-0539">Nucleus</keyword>
<keyword id="KW-0597">Phosphoprotein</keyword>
<keyword id="KW-0636">Prenylation</keyword>
<keyword id="KW-1185">Reference proteome</keyword>
<keyword id="KW-0677">Repeat</keyword>
<feature type="chain" id="PRO_0000209748" description="Phosphatidylinositol polyphosphate 5-phosphatase type IV" evidence="1">
    <location>
        <begin position="1"/>
        <end position="644"/>
    </location>
</feature>
<feature type="propeptide" id="PRO_0000431689" description="Removed in mature form" evidence="1">
    <location>
        <begin position="645"/>
        <end position="647"/>
    </location>
</feature>
<feature type="repeat" description="1">
    <location>
        <begin position="52"/>
        <end position="55"/>
    </location>
</feature>
<feature type="repeat" description="2">
    <location>
        <begin position="76"/>
        <end position="79"/>
    </location>
</feature>
<feature type="repeat" description="3">
    <location>
        <begin position="240"/>
        <end position="243"/>
    </location>
</feature>
<feature type="region of interest" description="Disordered" evidence="3">
    <location>
        <begin position="1"/>
        <end position="80"/>
    </location>
</feature>
<feature type="region of interest" description="3 X 4 AA repeats of P-X-X-P">
    <location>
        <begin position="52"/>
        <end position="243"/>
    </location>
</feature>
<feature type="region of interest" description="Disordered" evidence="3">
    <location>
        <begin position="101"/>
        <end position="131"/>
    </location>
</feature>
<feature type="region of interest" description="Disordered" evidence="3">
    <location>
        <begin position="177"/>
        <end position="196"/>
    </location>
</feature>
<feature type="compositionally biased region" description="Polar residues" evidence="3">
    <location>
        <begin position="60"/>
        <end position="75"/>
    </location>
</feature>
<feature type="compositionally biased region" description="Polar residues" evidence="3">
    <location>
        <begin position="120"/>
        <end position="129"/>
    </location>
</feature>
<feature type="modified residue" description="Phosphoserine" evidence="10">
    <location>
        <position position="103"/>
    </location>
</feature>
<feature type="modified residue" description="Phosphothreonine" evidence="10">
    <location>
        <position position="197"/>
    </location>
</feature>
<feature type="modified residue" description="Phosphoserine" evidence="2">
    <location>
        <position position="245"/>
    </location>
</feature>
<feature type="modified residue" description="Phosphoserine" evidence="10">
    <location>
        <position position="259"/>
    </location>
</feature>
<feature type="modified residue" description="Cysteine methyl ester" evidence="1">
    <location>
        <position position="644"/>
    </location>
</feature>
<feature type="lipid moiety-binding region" description="S-farnesyl cysteine" evidence="1">
    <location>
        <position position="644"/>
    </location>
</feature>
<name>INP5E_MOUSE</name>
<comment type="function">
    <text evidence="1 4 5">Phosphatidylinositol (PtdIns) phosphatase that specifically hydrolyzes the 5-phosphate of phosphatidylinositol-3,4,5-trisphosphate (PtdIns(3,4,5)P3), phosphatidylinositol 4,5-bisphosphate (PtdIns(4,5)P2) and phosphatidylinositol 3,5-bisphosphate (PtdIns(3,5)P2). Specific for lipid substrates, inactive towards water soluble inositol phosphates. Specific for lipid substrates, inactive towards water soluble inositol phosphates (By similarity) (PubMed:10806194). Plays an essential role in the primary cilium by controlling ciliary growth and phosphoinositide 3-kinase (PI3K) signaling and stability (PubMed:19668215).</text>
</comment>
<comment type="catalytic activity">
    <reaction evidence="1">
        <text>a 1,2-diacyl-sn-glycero-3-phospho-(1D-myo-inositol-4,5-bisphosphate) + H2O = a 1,2-diacyl-sn-glycero-3-phospho-(1D-myo-inositol 4-phosphate) + phosphate</text>
        <dbReference type="Rhea" id="RHEA:22764"/>
        <dbReference type="ChEBI" id="CHEBI:15377"/>
        <dbReference type="ChEBI" id="CHEBI:43474"/>
        <dbReference type="ChEBI" id="CHEBI:58178"/>
        <dbReference type="ChEBI" id="CHEBI:58456"/>
        <dbReference type="EC" id="3.1.3.36"/>
    </reaction>
    <physiologicalReaction direction="left-to-right" evidence="1">
        <dbReference type="Rhea" id="RHEA:22765"/>
    </physiologicalReaction>
</comment>
<comment type="catalytic activity">
    <reaction evidence="4">
        <text>a 1,2-diacyl-sn-glycero-3-phospho-(1D-myo-inositol-3,4,5-trisphosphate) + H2O = a 1,2-diacyl-sn-glycero-3-phospho-(1D-myo-inositol-3,4-bisphosphate) + phosphate</text>
        <dbReference type="Rhea" id="RHEA:25528"/>
        <dbReference type="ChEBI" id="CHEBI:15377"/>
        <dbReference type="ChEBI" id="CHEBI:43474"/>
        <dbReference type="ChEBI" id="CHEBI:57658"/>
        <dbReference type="ChEBI" id="CHEBI:57836"/>
        <dbReference type="EC" id="3.1.3.86"/>
    </reaction>
    <physiologicalReaction direction="left-to-right" evidence="9">
        <dbReference type="Rhea" id="RHEA:25529"/>
    </physiologicalReaction>
</comment>
<comment type="catalytic activity">
    <reaction evidence="4">
        <text>a 1,2-diacyl-sn-glycero-3-phospho-(1D-myo-inositol-3,5-bisphosphate) + H2O = a 1,2-diacyl-sn-glycero-3-phospho-(1D-myo-inositol-3-phosphate) + phosphate</text>
        <dbReference type="Rhea" id="RHEA:32955"/>
        <dbReference type="ChEBI" id="CHEBI:15377"/>
        <dbReference type="ChEBI" id="CHEBI:43474"/>
        <dbReference type="ChEBI" id="CHEBI:57923"/>
        <dbReference type="ChEBI" id="CHEBI:58088"/>
    </reaction>
    <physiologicalReaction direction="left-to-right" evidence="9">
        <dbReference type="Rhea" id="RHEA:32956"/>
    </physiologicalReaction>
</comment>
<comment type="subunit">
    <text evidence="1">Interacts (when prenylated) with PDE6D; this is important for normal location in cilia.</text>
</comment>
<comment type="subcellular location">
    <subcellularLocation>
        <location evidence="5">Cytoplasm</location>
        <location evidence="5">Cytoskeleton</location>
        <location evidence="5">Cilium axoneme</location>
    </subcellularLocation>
    <subcellularLocation>
        <location evidence="4">Golgi apparatus</location>
        <location evidence="4">Golgi stack membrane</location>
        <topology evidence="4">Peripheral membrane protein</topology>
        <orientation evidence="4">Cytoplasmic side</orientation>
    </subcellularLocation>
    <subcellularLocation>
        <location evidence="2">Cell projection</location>
        <location evidence="2">Ruffle</location>
    </subcellularLocation>
    <subcellularLocation>
        <location evidence="2">Cell membrane</location>
        <topology evidence="2">Peripheral membrane protein</topology>
        <orientation evidence="2">Cytoplasmic side</orientation>
    </subcellularLocation>
    <subcellularLocation>
        <location evidence="2">Cytoplasm</location>
    </subcellularLocation>
    <subcellularLocation>
        <location evidence="6">Nucleus</location>
    </subcellularLocation>
    <text evidence="4">Peripheral membrane protein associated with Golgi stacks.</text>
</comment>
<comment type="tissue specificity">
    <text evidence="4">Highly expressed in testis, in pachytene and diplotene spermatocytes, but not in more mature elongating spermatids. Detected in neurons throughout the brain.</text>
</comment>
<comment type="disruption phenotype">
    <text evidence="5">Deficient mice display signs of ciliopathies including prenatal and perinatal lethality, polycystic kidneys, arrest of eye development, abnormalities in primary cilia, cerebral developmental defects, and skeletal defects.</text>
</comment>
<comment type="similarity">
    <text evidence="8">Belongs to the inositol polyphosphate 5-phosphatase family.</text>
</comment>
<dbReference type="EC" id="3.1.3.36" evidence="1"/>
<dbReference type="EC" id="3.1.3.86" evidence="4"/>
<dbReference type="EMBL" id="AF226683">
    <property type="protein sequence ID" value="AAF86957.1"/>
    <property type="molecule type" value="mRNA"/>
</dbReference>
<dbReference type="EMBL" id="AK080075">
    <property type="protein sequence ID" value="BAC37823.1"/>
    <property type="molecule type" value="mRNA"/>
</dbReference>
<dbReference type="EMBL" id="AK154097">
    <property type="protein sequence ID" value="BAE32374.1"/>
    <property type="molecule type" value="mRNA"/>
</dbReference>
<dbReference type="EMBL" id="AK170786">
    <property type="protein sequence ID" value="BAE42028.1"/>
    <property type="molecule type" value="mRNA"/>
</dbReference>
<dbReference type="EMBL" id="BC052717">
    <property type="protein sequence ID" value="AAH52717.1"/>
    <property type="molecule type" value="mRNA"/>
</dbReference>
<dbReference type="EMBL" id="BC080295">
    <property type="protein sequence ID" value="AAH80295.1"/>
    <property type="molecule type" value="mRNA"/>
</dbReference>
<dbReference type="CCDS" id="CCDS15805.1"/>
<dbReference type="RefSeq" id="NP_001277366.1">
    <property type="nucleotide sequence ID" value="NM_001290437.1"/>
</dbReference>
<dbReference type="RefSeq" id="NP_149125.1">
    <property type="nucleotide sequence ID" value="NM_033134.3"/>
</dbReference>
<dbReference type="RefSeq" id="XP_036018337.1">
    <property type="nucleotide sequence ID" value="XM_036162444.1"/>
</dbReference>
<dbReference type="SMR" id="Q9JII1"/>
<dbReference type="BioGRID" id="211076">
    <property type="interactions" value="3"/>
</dbReference>
<dbReference type="FunCoup" id="Q9JII1">
    <property type="interactions" value="2319"/>
</dbReference>
<dbReference type="STRING" id="10090.ENSMUSP00000119485"/>
<dbReference type="iPTMnet" id="Q9JII1"/>
<dbReference type="PhosphoSitePlus" id="Q9JII1"/>
<dbReference type="PaxDb" id="10090-ENSMUSP00000119485"/>
<dbReference type="ProteomicsDB" id="269316"/>
<dbReference type="Pumba" id="Q9JII1"/>
<dbReference type="Antibodypedia" id="32176">
    <property type="antibodies" value="96 antibodies from 24 providers"/>
</dbReference>
<dbReference type="DNASU" id="64436"/>
<dbReference type="Ensembl" id="ENSMUST00000145701.8">
    <property type="protein sequence ID" value="ENSMUSP00000119485.2"/>
    <property type="gene ID" value="ENSMUSG00000026925.17"/>
</dbReference>
<dbReference type="GeneID" id="64436"/>
<dbReference type="KEGG" id="mmu:64436"/>
<dbReference type="UCSC" id="uc008ivf.2">
    <property type="organism name" value="mouse"/>
</dbReference>
<dbReference type="AGR" id="MGI:1927753"/>
<dbReference type="CTD" id="56623"/>
<dbReference type="MGI" id="MGI:1927753">
    <property type="gene designation" value="Inpp5e"/>
</dbReference>
<dbReference type="VEuPathDB" id="HostDB:ENSMUSG00000026925"/>
<dbReference type="eggNOG" id="KOG0565">
    <property type="taxonomic scope" value="Eukaryota"/>
</dbReference>
<dbReference type="GeneTree" id="ENSGT00940000158199"/>
<dbReference type="HOGENOM" id="CLU_011711_5_5_1"/>
<dbReference type="InParanoid" id="Q9JII1"/>
<dbReference type="OMA" id="HADYKLR"/>
<dbReference type="OrthoDB" id="2248459at2759"/>
<dbReference type="PhylomeDB" id="Q9JII1"/>
<dbReference type="TreeFam" id="TF323475"/>
<dbReference type="BRENDA" id="3.1.3.36">
    <property type="organism ID" value="3474"/>
</dbReference>
<dbReference type="Reactome" id="R-MMU-1660514">
    <property type="pathway name" value="Synthesis of PIPs at the Golgi membrane"/>
</dbReference>
<dbReference type="Reactome" id="R-MMU-5624958">
    <property type="pathway name" value="ARL13B-mediated ciliary trafficking of INPP5E"/>
</dbReference>
<dbReference type="BioGRID-ORCS" id="64436">
    <property type="hits" value="5 hits in 80 CRISPR screens"/>
</dbReference>
<dbReference type="ChiTaRS" id="Inpp5e">
    <property type="organism name" value="mouse"/>
</dbReference>
<dbReference type="PRO" id="PR:Q9JII1"/>
<dbReference type="Proteomes" id="UP000000589">
    <property type="component" value="Chromosome 2"/>
</dbReference>
<dbReference type="RNAct" id="Q9JII1">
    <property type="molecule type" value="protein"/>
</dbReference>
<dbReference type="Bgee" id="ENSMUSG00000026925">
    <property type="expression patterns" value="Expressed in floor plate of midbrain and 248 other cell types or tissues"/>
</dbReference>
<dbReference type="ExpressionAtlas" id="Q9JII1">
    <property type="expression patterns" value="baseline and differential"/>
</dbReference>
<dbReference type="GO" id="GO:0005930">
    <property type="term" value="C:axoneme"/>
    <property type="evidence" value="ECO:0000314"/>
    <property type="project" value="UniProtKB"/>
</dbReference>
<dbReference type="GO" id="GO:0005929">
    <property type="term" value="C:cilium"/>
    <property type="evidence" value="ECO:0000314"/>
    <property type="project" value="MGI"/>
</dbReference>
<dbReference type="GO" id="GO:0032580">
    <property type="term" value="C:Golgi cisterna membrane"/>
    <property type="evidence" value="ECO:0007669"/>
    <property type="project" value="UniProtKB-SubCell"/>
</dbReference>
<dbReference type="GO" id="GO:0000139">
    <property type="term" value="C:Golgi membrane"/>
    <property type="evidence" value="ECO:0000314"/>
    <property type="project" value="MGI"/>
</dbReference>
<dbReference type="GO" id="GO:0005634">
    <property type="term" value="C:nucleus"/>
    <property type="evidence" value="ECO:0000314"/>
    <property type="project" value="UniProtKB"/>
</dbReference>
<dbReference type="GO" id="GO:0005886">
    <property type="term" value="C:plasma membrane"/>
    <property type="evidence" value="ECO:0007669"/>
    <property type="project" value="UniProtKB-SubCell"/>
</dbReference>
<dbReference type="GO" id="GO:0001726">
    <property type="term" value="C:ruffle"/>
    <property type="evidence" value="ECO:0007669"/>
    <property type="project" value="UniProtKB-SubCell"/>
</dbReference>
<dbReference type="GO" id="GO:0004445">
    <property type="term" value="F:inositol-polyphosphate 5-phosphatase activity"/>
    <property type="evidence" value="ECO:0007669"/>
    <property type="project" value="Ensembl"/>
</dbReference>
<dbReference type="GO" id="GO:0016314">
    <property type="term" value="F:phosphatidylinositol-3,4,5-trisphosphate 3-phosphatase activity"/>
    <property type="evidence" value="ECO:0007669"/>
    <property type="project" value="Ensembl"/>
</dbReference>
<dbReference type="GO" id="GO:0034485">
    <property type="term" value="F:phosphatidylinositol-3,4,5-trisphosphate 5-phosphatase activity"/>
    <property type="evidence" value="ECO:0007669"/>
    <property type="project" value="UniProtKB-EC"/>
</dbReference>
<dbReference type="GO" id="GO:0043813">
    <property type="term" value="F:phosphatidylinositol-3,5-bisphosphate 5-phosphatase activity"/>
    <property type="evidence" value="ECO:0007669"/>
    <property type="project" value="RHEA"/>
</dbReference>
<dbReference type="GO" id="GO:0004439">
    <property type="term" value="F:phosphatidylinositol-4,5-bisphosphate 5-phosphatase activity"/>
    <property type="evidence" value="ECO:0000314"/>
    <property type="project" value="MGI"/>
</dbReference>
<dbReference type="GO" id="GO:0060271">
    <property type="term" value="P:cilium assembly"/>
    <property type="evidence" value="ECO:0000314"/>
    <property type="project" value="MGI"/>
</dbReference>
<dbReference type="GO" id="GO:0051898">
    <property type="term" value="P:negative regulation of phosphatidylinositol 3-kinase/protein kinase B signal transduction"/>
    <property type="evidence" value="ECO:0007669"/>
    <property type="project" value="Ensembl"/>
</dbReference>
<dbReference type="GO" id="GO:1903565">
    <property type="term" value="P:negative regulation of protein localization to cilium"/>
    <property type="evidence" value="ECO:0000315"/>
    <property type="project" value="MGI"/>
</dbReference>
<dbReference type="GO" id="GO:0017148">
    <property type="term" value="P:negative regulation of translation"/>
    <property type="evidence" value="ECO:0007669"/>
    <property type="project" value="Ensembl"/>
</dbReference>
<dbReference type="GO" id="GO:0046856">
    <property type="term" value="P:phosphatidylinositol dephosphorylation"/>
    <property type="evidence" value="ECO:0000314"/>
    <property type="project" value="MGI"/>
</dbReference>
<dbReference type="GO" id="GO:0046488">
    <property type="term" value="P:phosphatidylinositol metabolic process"/>
    <property type="evidence" value="ECO:0000314"/>
    <property type="project" value="MGI"/>
</dbReference>
<dbReference type="GO" id="GO:1902140">
    <property type="term" value="P:response to inositol"/>
    <property type="evidence" value="ECO:0000314"/>
    <property type="project" value="MGI"/>
</dbReference>
<dbReference type="CDD" id="cd09095">
    <property type="entry name" value="INPP5c_INPP5E-like"/>
    <property type="match status" value="1"/>
</dbReference>
<dbReference type="FunFam" id="3.60.10.10:FF:000039">
    <property type="entry name" value="72 kDa inositol polyphosphate 5-phosphatase"/>
    <property type="match status" value="1"/>
</dbReference>
<dbReference type="Gene3D" id="3.60.10.10">
    <property type="entry name" value="Endonuclease/exonuclease/phosphatase"/>
    <property type="match status" value="1"/>
</dbReference>
<dbReference type="InterPro" id="IPR036691">
    <property type="entry name" value="Endo/exonu/phosph_ase_sf"/>
</dbReference>
<dbReference type="InterPro" id="IPR042478">
    <property type="entry name" value="INPP5E"/>
</dbReference>
<dbReference type="InterPro" id="IPR000300">
    <property type="entry name" value="IPPc"/>
</dbReference>
<dbReference type="PANTHER" id="PTHR46625">
    <property type="entry name" value="72 KDA INOSITOL POLYPHOSPHATE 5-PHOSPHATASE"/>
    <property type="match status" value="1"/>
</dbReference>
<dbReference type="PANTHER" id="PTHR46625:SF1">
    <property type="entry name" value="PHOSPHATIDYLINOSITOL POLYPHOSPHATE 5-PHOSPHATASE TYPE IV"/>
    <property type="match status" value="1"/>
</dbReference>
<dbReference type="Pfam" id="PF22669">
    <property type="entry name" value="Exo_endo_phos2"/>
    <property type="match status" value="1"/>
</dbReference>
<dbReference type="SMART" id="SM00128">
    <property type="entry name" value="IPPc"/>
    <property type="match status" value="1"/>
</dbReference>
<dbReference type="SUPFAM" id="SSF56219">
    <property type="entry name" value="DNase I-like"/>
    <property type="match status" value="1"/>
</dbReference>